<gene>
    <name evidence="12" type="primary">BSLS</name>
</gene>
<sequence>MEPPNNANTGQLGPTLPNGTVDLPTDLSREITRHFGLEQDEIEEILPCTPFQRDVIECASDDKRRAVGHVVYEIPEDVDTERLAAAWKATVRYTPALRTCIFTSETGNAFQVVLRDYFIFARMYCPSAHLKSAIVKDEATAAVAGPRCNRYVLTGEPNSKRRVLVWTFSHSFVDSAFQGRILQQVLAAYKDGHGRVFSLQPTTDLTESENGDHLSTPASERTVVIERATQFWQEKLHGLDASVFPHLPSHKRVPAIDARADHYLPCPPFIQHEWSSTTVCRTALAILLARYTHSSEALFGVVTEQSHEEHPLLLDGPTSTVVPFRVLCALNQSVSKVMEAITTYDHDMRQFAHAGLCNISRIGDDASAACGFQTVLMVTDSRTAGDDEIHQVLEESEKFIPCTDRALLLSCQMTDEGVLLVARYDQSILEPLQMARFLRQLGFLINKLQSTDGSPCVGQLDVLAPEDRTEIEGWNSEPLQTQDCLIHSEVVRNAGDTPNKPAVCAWDGEWTYSELNNVSSRLASYISSLDLGQQLIVPIYLEKSKWVMAAILAVLKAGHAFTLIDPNDPPARTAQIIKQASASIALTSALHQSKMQAVVGRCITVDDDLVQTLTTFEGSQVASAAKPGDLAYVIFTSGSTGDPKGIMIEHRAFYSSVVKFGKALGIRSSTRALQFATHGFGAFLLEVLTTLIHGGCICVPSDHDRMHNIPGFIRQNQINWMMATPSYMTTMKPEDVPGLETLVLVGEQMSSSINDVWLSELQLLDGYGQSESSSICFVGKIDDSSRDPNNLGWAIGAHSWIINPDNPDQLVPIGAIGELLIESPGIARGYLFSQSTETPFLERAPAWYASKQPPYGVKFYRTGDLARYAPDGTVICLGRMDSQVKIRGQRVELDAIENLLRRQFPSDVTVVAEAVKRSDLPSSVVITGFLISSEYVVGAPSTEDTYILDQVVTQEINAKMRQILPAHSIPSFYICMKSLPRTATGKVDRRKLRSIGSSLLALQAQSTAPRSSQAPDASAGVTKLEEVWMDIFNLTPNSHNIGGNFFALGGDSITAIKMVNMARAAGIQLKVSDIFQNPTLASLQAAIGGSSMTVTSIPALALDGPVEQSYSQGRLWFLDQLEIGANWYTIPYAVRLRGPLDVDALNRALLALEKRHETLRTTFEDQDGVGVQIIHETLLDQLRIINADHADYVQLLKQEQTAPFNLASESGWRVSLIRLDDDDNILSIVMHHIISDGWSIDVLRRELGQLYAAALHGADLFGSALSPLPIQYRDFSVWQKQDAQVAEHERQLQYWQKQLADCSPAKLPTDFHRPALLSGKATTVPVTITSELYYRLQEFCSTFNTTSFVVLLATFRAAHYRLTGVDDAVIGTPIANRNRHELENLIGFFVNTQCMRITINEDEDTFESLVRQVRSTTTAAFEHEDVPFERVVSAMLPGSRDLSQNPLAQLVFAIHSHKDLGKFELEALESEPLQNEVYTRFDAEFHFFQAPDGLTGYINFATELFKVETIQNVVSVFLQILRHGLEHPQTLISVVPLTDGLAELRSMGLLEIKKVEYPRDSSVVDVFRTQVASYPDTLAVVDSSSRLTYAELDHQSDLLATWLRQQNLPTEALVVVLAPRSCETIITFLGILKANLAYLPLDIRSPITRMRDVLSTLPGRTIALLCSDEVAPDFQLPSIELVRIADALEEAAGMTSLNGHEHVPVPSPSPTSLAYVLYTSGSTGRPKGVMIEHRAIVRLARSDIIPDYRPACGDTMAHMFNTAFDGATYEIYTMLLNGGTLVCVDYMDTLSPKSLEAVFKKEQVNATIMAPALLKLYLADARDALKGLDVLISGGDRFDPQDAVDAQSLVRGSCYNGYGPTENGVFSTVYKVDKNDPFVNGVPLGRAVNNSGAYVVDRNQQLVGPGIIGELVVTGDGLARGYTERAFDQNRFTQLKVEGQSVRGYRTGDRVRYRVGEGLIEFFGRMDFQFKIRSNRIEAGEVEAAILSHPAVRNAAVILRVEEKLEPEIVGFVVAEHDDTAEQEEAGDQVEGWQAFFESTTYTELDTVSSSEIGKDFKGWTSMYDGNEIDKAEMQEWLDDTIHTLTDGQALGHVLEIGTGSGMVLFNLGSGLQSFVGLEPSKSAAAFVNNAIKSTPALAGKAQVFVGTATDTNKLDDLHPDLVIFNSVLQYFPTRDYLERVVDALVHLRSAKRIFFGDVRSYATNRHFLAARAIYTLGNHTTKDEVRKKMAEMEEREEEFLVEPAFFTTLVNRLPDVRHVEIIPKNMQATNELSAYRYAAVVHLRGSDELTRPVHPIKMDDWVDFQASHMHKDALREYLRLAENTKTVAISNIPYGKTIFERQVVESLDETSEDAPHASLDGAAWISAVRSDAKARSSLSVPDLVLLAKETGFRVEVSAARQWSQSGALDAVFHRYPAEPGVRTLFQFPTDNDVRMSAPLTNQPLQRLQKRRVAVQVREWLQDRIPSYMIPSHIVALDQMPLNTSGKVDRKELSRQAKAIKKVQKSAPPTAPAFPLSEVEVMLCEELTKTFEMDVNITDDFFQLGGHSLLATRLVARISHRLGARLTVKDVFDYPVFSELADIIRQQLASKNTLLPTASAGGGGQDKKESAGVAPTTDMEAMLCEEFANILGMDVGITDNFFDLGGHSLMATRLAARIGHRLNTTISVKDIFSHPVIFQLSAKLEVSQLESSSGGTDIKMPDYTAFQLIPAADAEKFMQDHIYPQINFSQDMVQDVYLATHLQQCFLRDVFGRPKPLVPFYVEFPPDSNPHTLATACTSLVDKYDIFRTIFVEAEGNLYQVVLKHLNLDIDVVETDANVHKTSSDLVDAIAKEPVRLGQPMIQVKVLKQTSSVRVLLWLSHALYDGLSWEHIVRDLHILSKERSLPPATQFSRYMQYVDHTRGPGCDFWRDVLQNAPITNLSDAGSGGRPTKAGDPRVWHAGKVISGPSQAIRSSITQATVFNAACAIVLSKETGTDNVVFGRIVSGRQGLPVRWQNIIGPCTNAVPVRAVVDAHGNHQQMLRDLQEQYLLSLPYETIGFDEIKRSCTDWPDSARNYGCCVTYQNFEYHPESEVDQQRVEMGILAKKAELIKEEPLYNVAIAGEVEPDGVHLQVTVVVDSQLFSQEGATHLMEQVCNTFQALNASL</sequence>
<protein>
    <recommendedName>
        <fullName evidence="12">Bassianolide nonribosomal cyclodepsipeptide synthetase</fullName>
        <shortName evidence="12">BSLS</shortName>
    </recommendedName>
    <domain>
        <recommendedName>
            <fullName evidence="12">Nonribosomal peptide synthetase</fullName>
            <ecNumber evidence="5 6 9 10 11">6.1.2.-</ecNumber>
        </recommendedName>
    </domain>
    <domain>
        <recommendedName>
            <fullName evidence="12">S-adenosyl-L-methionine-dependent N-methyltransferase</fullName>
            <ecNumber evidence="9 10 11">2.1.1.-</ecNumber>
        </recommendedName>
    </domain>
</protein>
<feature type="chain" id="PRO_0000448666" description="Bassianolide nonribosomal cyclodepsipeptide synthetase">
    <location>
        <begin position="1"/>
        <end position="3146"/>
    </location>
</feature>
<feature type="domain" description="Carrier 1" evidence="2">
    <location>
        <begin position="1015"/>
        <end position="1091"/>
    </location>
</feature>
<feature type="domain" description="Carrier 2" evidence="2">
    <location>
        <begin position="2514"/>
        <end position="2588"/>
    </location>
</feature>
<feature type="domain" description="Carrier 3" evidence="2">
    <location>
        <begin position="2614"/>
        <end position="2688"/>
    </location>
</feature>
<feature type="region of interest" description="Disordered" evidence="3">
    <location>
        <begin position="1"/>
        <end position="23"/>
    </location>
</feature>
<feature type="region of interest" description="Condensation 1" evidence="1 14">
    <location>
        <begin position="69"/>
        <end position="454"/>
    </location>
</feature>
<feature type="region of interest" description="Adenylation 1" evidence="1 14">
    <location>
        <begin position="495"/>
        <end position="887"/>
    </location>
</feature>
<feature type="region of interest" description="Condensation 2" evidence="1 14">
    <location>
        <begin position="1109"/>
        <end position="1538"/>
    </location>
</feature>
<feature type="region of interest" description="Adenylation 2" evidence="1 14">
    <location>
        <begin position="1567"/>
        <end position="1973"/>
    </location>
</feature>
<feature type="region of interest" description="S-adenosyl-L-methionine-dependent N-methyltransferase (MT)" evidence="1 10">
    <location>
        <begin position="2041"/>
        <end position="2181"/>
    </location>
</feature>
<feature type="region of interest" description="Condensation 3" evidence="1 14">
    <location>
        <begin position="2734"/>
        <end position="3138"/>
    </location>
</feature>
<feature type="compositionally biased region" description="Polar residues" evidence="3">
    <location>
        <begin position="1"/>
        <end position="12"/>
    </location>
</feature>
<feature type="modified residue" description="O-(pantetheine 4'-phosphoryl)serine" evidence="2">
    <location>
        <position position="1052"/>
    </location>
</feature>
<feature type="modified residue" description="O-(pantetheine 4'-phosphoryl)serine" evidence="2">
    <location>
        <position position="2548"/>
    </location>
</feature>
<feature type="modified residue" description="O-(pantetheine 4'-phosphoryl)serine" evidence="2">
    <location>
        <position position="2648"/>
    </location>
</feature>
<dbReference type="EC" id="6.1.2.-" evidence="5 6 9 10 11"/>
<dbReference type="EC" id="2.1.1.-" evidence="9 10 11"/>
<dbReference type="EMBL" id="FJ439897">
    <property type="protein sequence ID" value="ACR78148.1"/>
    <property type="molecule type" value="Genomic_DNA"/>
</dbReference>
<dbReference type="SMR" id="D1FVF0"/>
<dbReference type="GO" id="GO:0005737">
    <property type="term" value="C:cytoplasm"/>
    <property type="evidence" value="ECO:0007669"/>
    <property type="project" value="TreeGrafter"/>
</dbReference>
<dbReference type="GO" id="GO:0016853">
    <property type="term" value="F:isomerase activity"/>
    <property type="evidence" value="ECO:0007669"/>
    <property type="project" value="UniProtKB-KW"/>
</dbReference>
<dbReference type="GO" id="GO:0016874">
    <property type="term" value="F:ligase activity"/>
    <property type="evidence" value="ECO:0007669"/>
    <property type="project" value="UniProtKB-KW"/>
</dbReference>
<dbReference type="GO" id="GO:0008168">
    <property type="term" value="F:methyltransferase activity"/>
    <property type="evidence" value="ECO:0007669"/>
    <property type="project" value="UniProtKB-KW"/>
</dbReference>
<dbReference type="GO" id="GO:0031177">
    <property type="term" value="F:phosphopantetheine binding"/>
    <property type="evidence" value="ECO:0007669"/>
    <property type="project" value="InterPro"/>
</dbReference>
<dbReference type="GO" id="GO:0043041">
    <property type="term" value="P:amino acid activation for nonribosomal peptide biosynthetic process"/>
    <property type="evidence" value="ECO:0007669"/>
    <property type="project" value="TreeGrafter"/>
</dbReference>
<dbReference type="GO" id="GO:0032259">
    <property type="term" value="P:methylation"/>
    <property type="evidence" value="ECO:0007669"/>
    <property type="project" value="UniProtKB-KW"/>
</dbReference>
<dbReference type="GO" id="GO:0044550">
    <property type="term" value="P:secondary metabolite biosynthetic process"/>
    <property type="evidence" value="ECO:0007669"/>
    <property type="project" value="TreeGrafter"/>
</dbReference>
<dbReference type="CDD" id="cd05930">
    <property type="entry name" value="A_NRPS"/>
    <property type="match status" value="1"/>
</dbReference>
<dbReference type="CDD" id="cd05918">
    <property type="entry name" value="A_NRPS_SidN3_like"/>
    <property type="match status" value="1"/>
</dbReference>
<dbReference type="CDD" id="cd02440">
    <property type="entry name" value="AdoMet_MTases"/>
    <property type="match status" value="1"/>
</dbReference>
<dbReference type="CDD" id="cd19542">
    <property type="entry name" value="CT_NRPS-like"/>
    <property type="match status" value="1"/>
</dbReference>
<dbReference type="CDD" id="cd19545">
    <property type="entry name" value="FUM14_C_NRPS-like"/>
    <property type="match status" value="1"/>
</dbReference>
<dbReference type="CDD" id="cd19531">
    <property type="entry name" value="LCL_NRPS-like"/>
    <property type="match status" value="1"/>
</dbReference>
<dbReference type="FunFam" id="3.30.300.30:FF:000084">
    <property type="entry name" value="Enniatin synthase"/>
    <property type="match status" value="1"/>
</dbReference>
<dbReference type="FunFam" id="3.30.300.30:FF:000015">
    <property type="entry name" value="Nonribosomal peptide synthase SidD"/>
    <property type="match status" value="1"/>
</dbReference>
<dbReference type="Gene3D" id="3.30.300.30">
    <property type="match status" value="3"/>
</dbReference>
<dbReference type="Gene3D" id="3.40.50.980">
    <property type="match status" value="2"/>
</dbReference>
<dbReference type="Gene3D" id="1.10.1200.10">
    <property type="entry name" value="ACP-like"/>
    <property type="match status" value="2"/>
</dbReference>
<dbReference type="Gene3D" id="3.40.50.1820">
    <property type="entry name" value="alpha/beta hydrolase"/>
    <property type="match status" value="1"/>
</dbReference>
<dbReference type="Gene3D" id="3.30.559.10">
    <property type="entry name" value="Chloramphenicol acetyltransferase-like domain"/>
    <property type="match status" value="3"/>
</dbReference>
<dbReference type="Gene3D" id="2.30.38.10">
    <property type="entry name" value="Luciferase, Domain 3"/>
    <property type="match status" value="1"/>
</dbReference>
<dbReference type="Gene3D" id="3.40.50.12780">
    <property type="entry name" value="N-terminal domain of ligase-like"/>
    <property type="match status" value="1"/>
</dbReference>
<dbReference type="Gene3D" id="3.30.559.30">
    <property type="entry name" value="Nonribosomal peptide synthetase, condensation domain"/>
    <property type="match status" value="3"/>
</dbReference>
<dbReference type="Gene3D" id="3.40.50.150">
    <property type="entry name" value="Vaccinia Virus protein VP39"/>
    <property type="match status" value="1"/>
</dbReference>
<dbReference type="InterPro" id="IPR010071">
    <property type="entry name" value="AA_adenyl_dom"/>
</dbReference>
<dbReference type="InterPro" id="IPR029058">
    <property type="entry name" value="AB_hydrolase_fold"/>
</dbReference>
<dbReference type="InterPro" id="IPR036736">
    <property type="entry name" value="ACP-like_sf"/>
</dbReference>
<dbReference type="InterPro" id="IPR045851">
    <property type="entry name" value="AMP-bd_C_sf"/>
</dbReference>
<dbReference type="InterPro" id="IPR020845">
    <property type="entry name" value="AMP-binding_CS"/>
</dbReference>
<dbReference type="InterPro" id="IPR000873">
    <property type="entry name" value="AMP-dep_synth/lig_dom"/>
</dbReference>
<dbReference type="InterPro" id="IPR042099">
    <property type="entry name" value="ANL_N_sf"/>
</dbReference>
<dbReference type="InterPro" id="IPR023213">
    <property type="entry name" value="CAT-like_dom_sf"/>
</dbReference>
<dbReference type="InterPro" id="IPR001242">
    <property type="entry name" value="Condensatn"/>
</dbReference>
<dbReference type="InterPro" id="IPR020806">
    <property type="entry name" value="PKS_PP-bd"/>
</dbReference>
<dbReference type="InterPro" id="IPR009081">
    <property type="entry name" value="PP-bd_ACP"/>
</dbReference>
<dbReference type="InterPro" id="IPR006162">
    <property type="entry name" value="Ppantetheine_attach_site"/>
</dbReference>
<dbReference type="InterPro" id="IPR029063">
    <property type="entry name" value="SAM-dependent_MTases_sf"/>
</dbReference>
<dbReference type="NCBIfam" id="TIGR01733">
    <property type="entry name" value="AA-adenyl-dom"/>
    <property type="match status" value="2"/>
</dbReference>
<dbReference type="PANTHER" id="PTHR45527:SF1">
    <property type="entry name" value="FATTY ACID SYNTHASE"/>
    <property type="match status" value="1"/>
</dbReference>
<dbReference type="PANTHER" id="PTHR45527">
    <property type="entry name" value="NONRIBOSOMAL PEPTIDE SYNTHETASE"/>
    <property type="match status" value="1"/>
</dbReference>
<dbReference type="Pfam" id="PF00501">
    <property type="entry name" value="AMP-binding"/>
    <property type="match status" value="2"/>
</dbReference>
<dbReference type="Pfam" id="PF00668">
    <property type="entry name" value="Condensation"/>
    <property type="match status" value="2"/>
</dbReference>
<dbReference type="Pfam" id="PF00550">
    <property type="entry name" value="PP-binding"/>
    <property type="match status" value="3"/>
</dbReference>
<dbReference type="SMART" id="SM00823">
    <property type="entry name" value="PKS_PP"/>
    <property type="match status" value="3"/>
</dbReference>
<dbReference type="SUPFAM" id="SSF56801">
    <property type="entry name" value="Acetyl-CoA synthetase-like"/>
    <property type="match status" value="2"/>
</dbReference>
<dbReference type="SUPFAM" id="SSF47336">
    <property type="entry name" value="ACP-like"/>
    <property type="match status" value="3"/>
</dbReference>
<dbReference type="SUPFAM" id="SSF52777">
    <property type="entry name" value="CoA-dependent acyltransferases"/>
    <property type="match status" value="6"/>
</dbReference>
<dbReference type="SUPFAM" id="SSF53335">
    <property type="entry name" value="S-adenosyl-L-methionine-dependent methyltransferases"/>
    <property type="match status" value="1"/>
</dbReference>
<dbReference type="PROSITE" id="PS00455">
    <property type="entry name" value="AMP_BINDING"/>
    <property type="match status" value="2"/>
</dbReference>
<dbReference type="PROSITE" id="PS50075">
    <property type="entry name" value="CARRIER"/>
    <property type="match status" value="3"/>
</dbReference>
<dbReference type="PROSITE" id="PS00012">
    <property type="entry name" value="PHOSPHOPANTETHEINE"/>
    <property type="match status" value="3"/>
</dbReference>
<organism>
    <name type="scientific">Beauveria bassiana</name>
    <name type="common">White muscardine disease fungus</name>
    <name type="synonym">Tritirachium shiotae</name>
    <dbReference type="NCBI Taxonomy" id="176275"/>
    <lineage>
        <taxon>Eukaryota</taxon>
        <taxon>Fungi</taxon>
        <taxon>Dikarya</taxon>
        <taxon>Ascomycota</taxon>
        <taxon>Pezizomycotina</taxon>
        <taxon>Sordariomycetes</taxon>
        <taxon>Hypocreomycetidae</taxon>
        <taxon>Hypocreales</taxon>
        <taxon>Cordycipitaceae</taxon>
        <taxon>Beauveria</taxon>
    </lineage>
</organism>
<name>BSLS_BEABA</name>
<evidence type="ECO:0000255" key="1"/>
<evidence type="ECO:0000255" key="2">
    <source>
        <dbReference type="PROSITE-ProRule" id="PRU00258"/>
    </source>
</evidence>
<evidence type="ECO:0000256" key="3">
    <source>
        <dbReference type="SAM" id="MobiDB-lite"/>
    </source>
</evidence>
<evidence type="ECO:0000269" key="4">
    <source>
    </source>
</evidence>
<evidence type="ECO:0000269" key="5">
    <source>
    </source>
</evidence>
<evidence type="ECO:0000269" key="6">
    <source>
    </source>
</evidence>
<evidence type="ECO:0000269" key="7">
    <source>
    </source>
</evidence>
<evidence type="ECO:0000269" key="8">
    <source>
    </source>
</evidence>
<evidence type="ECO:0000269" key="9">
    <source>
    </source>
</evidence>
<evidence type="ECO:0000269" key="10">
    <source>
    </source>
</evidence>
<evidence type="ECO:0000269" key="11">
    <source>
    </source>
</evidence>
<evidence type="ECO:0000303" key="12">
    <source>
    </source>
</evidence>
<evidence type="ECO:0000305" key="13"/>
<evidence type="ECO:0000305" key="14">
    <source>
    </source>
</evidence>
<accession>D1FVF0</accession>
<proteinExistence type="evidence at protein level"/>
<comment type="function">
    <text evidence="4 5 6 9 10 11">Bassianolide nonribosomal synthetase that mediates the biosynthesis of bassianolide (BSL), a non-ribosomal cyclodepsipeptide that shows insecticidal and cancer cell antiproliferative activity (PubMed:19285149, PubMed:23608474, PubMed:23727842, PubMed:29163920, PubMed:31388353, PubMed:31471217). BSLS first catalyzes the iterative synthesis of an enzyme-bound dipeptidol monomer intermediate from D-2-hydroxyisovalerate and L-leucine before performing the condensation and cyclization of 4 dipeptidol monomers to yield the cyclic tetrameric ester bassianolide (PubMed:23608474, PubMed:23727842, PubMed:29163920, PubMed:31388353, PubMed:31471217). The N-methyltransferase MT domain is responsible for the methylation of the leucine residues of bassianolide (PubMed:29163920, PubMed:31388353). BSLS is flexible with both the amino acid and hydroxyl acid precursors, and produces bassianolide as the major product (containing N-methyl-L-Leu), together with small amounts of beauvericin and its analogs beauvericins A-C (containing N-methyl-L-Phe) (PubMed:31388353).</text>
</comment>
<comment type="catalytic activity">
    <reaction evidence="5 6 9 10 11">
        <text>4 (R)-2-hydroxy-3-methylbutanoate + 4 L-leucine + 4 S-adenosyl-L-methionine + 8 ATP = bassianolide + 8 AMP + 4 S-adenosyl-L-homocysteine + 8 diphosphate + 8 H(+)</text>
        <dbReference type="Rhea" id="RHEA:62272"/>
        <dbReference type="ChEBI" id="CHEBI:15378"/>
        <dbReference type="ChEBI" id="CHEBI:30616"/>
        <dbReference type="ChEBI" id="CHEBI:33019"/>
        <dbReference type="ChEBI" id="CHEBI:57427"/>
        <dbReference type="ChEBI" id="CHEBI:57856"/>
        <dbReference type="ChEBI" id="CHEBI:59789"/>
        <dbReference type="ChEBI" id="CHEBI:145108"/>
        <dbReference type="ChEBI" id="CHEBI:145660"/>
        <dbReference type="ChEBI" id="CHEBI:456215"/>
    </reaction>
    <physiologicalReaction direction="left-to-right" evidence="5 6 9 10 11">
        <dbReference type="Rhea" id="RHEA:62273"/>
    </physiologicalReaction>
</comment>
<comment type="biophysicochemical properties">
    <kinetics>
        <KM evidence="10">0.46 uM for L-phenylalanyl-N-acetyl-cysteamine thioester (by the MT domain)</KM>
        <KM evidence="10">2.8 uM for L-leucyl-N-acetyl-cysteamine thioester(by the MT domain)</KM>
        <Vmax evidence="10">0.41 uM/min/mg enzyme toward L-phenylalanyl-N-acetyl-cysteamine thioester (by the MT domain)</Vmax>
        <Vmax evidence="10">0.05 uM/min/mg enzyme toward L-leucyl-N-acetyl-cysteamine thioester (by the MT domain)</Vmax>
    </kinetics>
</comment>
<comment type="induction">
    <text evidence="7">Expression is induced during insect infection.</text>
</comment>
<comment type="domain">
    <text evidence="6 9 10 11 13">NRP synthetases are composed of discrete domains (adenylation (A), thiolation (T) or peptidyl carrier protein (PCP) and condensation (C) domains) which when grouped together are referred to as a single module. Each module is responsible for the recognition (via the A domain) and incorporation of a single amino acid into the growing peptide product. Thus, an NRP synthetase is generally composed of one or more modules and can terminate in a thioesterase domain (TE) that releases the newly synthesized peptide from the enzyme. Occasionally, additional domains required for further modifications are also present (Probable). Bassianolide synthetase has the C1-A1-T1-C2-A2-MT-T2a-T2b-C3 domain organization. During catalysis, C3 and C2 take turns to incorporate the two biosynthetic precursors into the growing depsipeptide chain that swings between T1 and T2a/T2b with C3 cyclizing the chain when it reaches the full length (PubMed:23727842, PubMed:29163920, PubMed:31388353, PubMed:31471217). The N-methyltransferase MT domain in module 2 is responsible for the methylation of the leucine residues integrated in the backbone structure (PubMed:29163920, PubMed:31388353).</text>
</comment>
<comment type="disruption phenotype">
    <text evidence="4">Abolishes the production of bassianolide but does not affect the biosynthesis of beauvericin (PubMed:19285149). Attenuates the virulence against insects, including the corn earworm (Helicoverpa zea), the fall armyworm (Spodoptera exigua) and the greater wax moth (Galleria mellonella) (PubMed:19285149).</text>
</comment>
<comment type="biotechnology">
    <text evidence="4 8">Shows insecticidal activity and contributes to the virulence of the fungus against insects including the corn earworm (Helicoverpa zea), the fall armyworm (Spodoptera exigua) and the greater wax moth (Galleria mellonella) (PubMed:19285149). Bassianolide possesses antitumor activities and displays significant cytotoxicity against several human tumor cell lines, including A549, SK-OV-3, HepG2, HCT-15, MCF-7 and MDA-MB 231 cell lines with IC(50) values of 7.24, 8.44, 15.39, 6.40, 11.42 and 3.98 ug/ml respectively (PubMed:27676608). Bassianolide especially induces G0/G1 arrest associated with a decrease of cyclin A, D1 and an increase of p53, MDM2, and p21 expression in human breast adenocarcinoma cell lines (PubMed:27676608).</text>
</comment>
<comment type="similarity">
    <text evidence="13">Belongs to the NRP synthetase family.</text>
</comment>
<keyword id="KW-0413">Isomerase</keyword>
<keyword id="KW-0436">Ligase</keyword>
<keyword id="KW-0489">Methyltransferase</keyword>
<keyword id="KW-0511">Multifunctional enzyme</keyword>
<keyword id="KW-0596">Phosphopantetheine</keyword>
<keyword id="KW-0597">Phosphoprotein</keyword>
<keyword id="KW-0677">Repeat</keyword>
<keyword id="KW-0949">S-adenosyl-L-methionine</keyword>
<keyword id="KW-0808">Transferase</keyword>
<reference key="1">
    <citation type="journal article" date="2009" name="Fungal Genet. Biol.">
        <title>Biosynthesis of the cyclooligomer depsipeptide bassianolide, an insecticidal virulence factor of Beauveria bassiana.</title>
        <authorList>
            <person name="Xu Y."/>
            <person name="Orozco R."/>
            <person name="Kithsiri Wijeratne E.M."/>
            <person name="Espinosa-Artiles P."/>
            <person name="Leslie Gunatilaka A.A."/>
            <person name="Patricia Stock S."/>
            <person name="Molnar I."/>
        </authorList>
    </citation>
    <scope>NUCLEOTIDE SEQUENCE [GENOMIC DNA]</scope>
    <scope>FUNCTION</scope>
    <scope>DISRUPTION PHENOTYPE</scope>
    <scope>DOMAIN</scope>
    <scope>BIOTECHNOLOGY</scope>
    <source>
        <strain>ATCC 7159</strain>
    </source>
</reference>
<reference key="2">
    <citation type="journal article" date="2013" name="Metab. Eng.">
        <title>Engineered production of fungal anticancer cyclooligomer depsipeptides in Saccharomyces cerevisiae.</title>
        <authorList>
            <person name="Yu D."/>
            <person name="Xu F."/>
            <person name="Zi J."/>
            <person name="Wang S."/>
            <person name="Gage D."/>
            <person name="Zeng J."/>
            <person name="Zhan J."/>
        </authorList>
    </citation>
    <scope>FUNCTION</scope>
    <scope>CATALYTIC ACTIVITY</scope>
</reference>
<reference key="3">
    <citation type="journal article" date="2013" name="Chem. Commun. (Camb.)">
        <title>Functional dissection and module swapping of fungal cyclooligomer depsipeptide synthetases.</title>
        <authorList>
            <person name="Yu D."/>
            <person name="Xu F."/>
            <person name="Gage D."/>
            <person name="Zhan J."/>
        </authorList>
    </citation>
    <scope>FUNCTION</scope>
    <scope>CATALYTIC ACTIVITY</scope>
    <scope>DOMAIN</scope>
</reference>
<reference key="4">
    <citation type="journal article" date="2015" name="J. Invertebr. Pathol.">
        <title>Assessing gene expression during pathogenesis: Use of qRT-PCR to follow toxin production in the entomopathogenic fungus Beauveria bassiana during infection and immune response of the insect host Triatoma infestans.</title>
        <authorList>
            <person name="Lobo L.S."/>
            <person name="Luz C."/>
            <person name="Fernandes E.K."/>
            <person name="Juarez M.P."/>
            <person name="Pedrini N."/>
        </authorList>
    </citation>
    <scope>INDUCTION</scope>
</reference>
<reference key="5">
    <citation type="journal article" date="2016" name="Bioorg. Chem.">
        <title>Synthesis and antitumor activity of (-)-bassianolide in MDA-MB 231 breast cancer cells through cell cycle arrest.</title>
        <authorList>
            <person name="Mun B."/>
            <person name="Park Y.J."/>
            <person name="Sung G.H."/>
            <person name="Lee Y."/>
            <person name="Kim K.H."/>
        </authorList>
    </citation>
    <scope>BIOTECHNOLOGY</scope>
</reference>
<reference key="6">
    <citation type="journal article" date="2017" name="Chem. Sci.">
        <title>Harnessing fungal nonribosomal cyclodepsipeptide synthetases for mechanistic insights and tailored engineering.</title>
        <authorList>
            <person name="Steiniger C."/>
            <person name="Hoffmann S."/>
            <person name="Mainz A."/>
            <person name="Kaiser M."/>
            <person name="Voigt K."/>
            <person name="Meyer V."/>
            <person name="Suessmuth R.D."/>
        </authorList>
    </citation>
    <scope>FUNCTION</scope>
    <scope>CATALYTIC ACTIVITY</scope>
    <scope>DOMAIN</scope>
</reference>
<reference key="7">
    <citation type="journal article" date="2019" name="Cell Chem. Biol.">
        <title>Probing Exchange Units for Combining Iterative and Linear Fungal Nonribosomal Peptide Synthetases.</title>
        <authorList>
            <person name="Steiniger C."/>
            <person name="Hoffmann S."/>
            <person name="Suessmuth R.D."/>
        </authorList>
    </citation>
    <scope>FUNCTION</scope>
    <scope>CATALYTIC ACTIVITY</scope>
    <scope>DOMAIN</scope>
</reference>
<reference key="8">
    <citation type="journal article" date="2019" name="J. Biol. Eng.">
        <title>Modified substrate specificity of a methyltransferase domain by protein insertion into an adenylation domain of the bassianolide synthetase.</title>
        <authorList>
            <person name="Xu F."/>
            <person name="Butler R."/>
            <person name="May K."/>
            <person name="Rexhepaj M."/>
            <person name="Yu D."/>
            <person name="Zi J."/>
            <person name="Chen Y."/>
            <person name="Liang Y."/>
            <person name="Zeng J."/>
            <person name="Hevel J."/>
            <person name="Zhan J."/>
        </authorList>
    </citation>
    <scope>FUNCTION</scope>
    <scope>CATALYTIC ACTIVITY</scope>
    <scope>DOMAIN</scope>
    <scope>BIOPHYSICOCHEMICAL PROPERTIES</scope>
</reference>